<proteinExistence type="evidence at protein level"/>
<comment type="function">
    <text evidence="5">Bifunctional type I diterpene synthase; part of the gene cluster that mediates the biosynthesis of talaronoid C, a fusicoccane diterpenoid with an unprecedented tricyclic 5/8/6 ring system (PubMed:36126322). The first step in the pathway is performed by the fusicoccadiene synthase tndC that possesses both prenyl transferase and terpene cyclase activity, converting isopentenyl diphosphate and dimethylallyl diphosphate into geranylgeranyl diphosphate (GGDP) and further converting GGDP into talarodiene, a precursor for talaronoid C (PubMed:36126322). The remaining enzymes from the cluster include the cytochrome P450 monooxygenase tndB, the aldehyde reductase tndE and the alcohol dehydrogenase tndF that are involved in the conversion of talarodiene into talaronoid C (PubMed:36126322).</text>
</comment>
<comment type="catalytic activity">
    <reaction evidence="5">
        <text>isopentenyl diphosphate + (2E,6E)-farnesyl diphosphate = (2E,6E,10E)-geranylgeranyl diphosphate + diphosphate</text>
        <dbReference type="Rhea" id="RHEA:17653"/>
        <dbReference type="ChEBI" id="CHEBI:33019"/>
        <dbReference type="ChEBI" id="CHEBI:58756"/>
        <dbReference type="ChEBI" id="CHEBI:128769"/>
        <dbReference type="ChEBI" id="CHEBI:175763"/>
        <dbReference type="EC" id="2.5.1.29"/>
    </reaction>
</comment>
<comment type="catalytic activity">
    <reaction evidence="5">
        <text>(2E,6E,10E)-geranylgeranyl diphosphate = talarodiene + diphosphate</text>
        <dbReference type="Rhea" id="RHEA:74547"/>
        <dbReference type="ChEBI" id="CHEBI:33019"/>
        <dbReference type="ChEBI" id="CHEBI:58756"/>
        <dbReference type="ChEBI" id="CHEBI:193158"/>
    </reaction>
    <physiologicalReaction direction="left-to-right" evidence="5">
        <dbReference type="Rhea" id="RHEA:74548"/>
    </physiologicalReaction>
</comment>
<comment type="pathway">
    <text evidence="5">Secondary metabolite biosynthesis; terpenoid biosynthesis.</text>
</comment>
<comment type="domain">
    <text evidence="1">The conserved DDXXD motifs as well as the NSE/DTE motif are important for the catalytic activity, presumably through binding to Mg(2+).</text>
</comment>
<comment type="similarity">
    <text evidence="7">In the N-terminal section; belongs to the terpene synthase family.</text>
</comment>
<comment type="similarity">
    <text evidence="7">In the C-terminal section; belongs to the FPP/GGPP synthase family.</text>
</comment>
<name>TNDC_ASPFV</name>
<protein>
    <recommendedName>
        <fullName evidence="6">Bifunctional type I diterpene synthase tndC</fullName>
    </recommendedName>
    <alternativeName>
        <fullName evidence="6">Talarodiene synthase tndC</fullName>
    </alternativeName>
    <alternativeName>
        <fullName evidence="6">Talaronoid C biosynthesis cluster protein C</fullName>
    </alternativeName>
    <domain>
        <recommendedName>
            <fullName evidence="6">Talarodiene synthase</fullName>
            <ecNumber evidence="5">4.2.3.-</ecNumber>
        </recommendedName>
    </domain>
    <domain>
        <recommendedName>
            <fullName evidence="6">Geranylgeranyl diphosphate synthase</fullName>
            <shortName evidence="6">GGDP synthase</shortName>
            <shortName evidence="6">GGS</shortName>
            <ecNumber evidence="5">2.5.1.29</ecNumber>
        </recommendedName>
    </domain>
</protein>
<gene>
    <name evidence="6" type="primary">tndC</name>
</gene>
<evidence type="ECO:0000250" key="1">
    <source>
        <dbReference type="UniProtKB" id="A0A169T193"/>
    </source>
</evidence>
<evidence type="ECO:0000250" key="2">
    <source>
        <dbReference type="UniProtKB" id="Q12051"/>
    </source>
</evidence>
<evidence type="ECO:0000250" key="3">
    <source>
        <dbReference type="UniProtKB" id="Q40577"/>
    </source>
</evidence>
<evidence type="ECO:0000256" key="4">
    <source>
        <dbReference type="SAM" id="MobiDB-lite"/>
    </source>
</evidence>
<evidence type="ECO:0000269" key="5">
    <source>
    </source>
</evidence>
<evidence type="ECO:0000303" key="6">
    <source>
    </source>
</evidence>
<evidence type="ECO:0000305" key="7"/>
<sequence length="764" mass="85750">MEYRYSTVVDPSTYETHGLCDGIPLRCHESPELEEIETLRCQEDWRRWVGPLGFYKGGLGPRWNFMAITVPECLPERLGVLGYANELAFLHDDVTDVADYGDLHNDDLKAAFEQAASTGHIEGSASGKRAIQAHIANEMMSIHKQHAITTLEAWAKFAELGSGRQHTTHFKTEDEYIKYRMIDIGTMFWYGMVTFGMGISIPEHELEMCHRLADTAYLNLGLTNDLYSWQKEYETAVAMDRDYVANIIGVIMEERNISEAEAKEVCREKIKKTIVDFRKIVDDTKARDDVSLDTKRYLEGLLYSLSGNLVWSIDCPRYHPWSSYNERQLDWMKNGIPKSPPKVNGNATANGNGVHHAPKESLANGTLNGHDRIHAPAVNGNGASHTSSIKGSTGGNGVTHSPVSNGSAVVNSALSMEIDTDLVNVFARKEYKSINGFKMHEGDNHPSNGQTKLNGNVTSWKVPGDVQTKVIQAPYDYISSLPSKGVRDHAIDALNVWCRVPAAKLDLIKLITNMLHNTSLMLDDLEDGSHLRRGRSSTHTIFGAGQTVNAANYHVIRALEEVQKFGDAESIVIFIEELKSLYVGQSLDLYWTNNAICPSVDEYFQMVENKTGGLFRLFGRLMSLHSSHPVKADLTGFLNQFGRYFQTRDDYQNLTSPEYTKQKGFCEDLDEGKFSLPLIHLMHSAPSNLVVRNIWTQRLVNNKASPAHKQTILELMKENGSLQFTMDALDVLHAKVEKSISDLEARFGVENFQLRLILEMLRKA</sequence>
<accession>A0A8K1AY78</accession>
<organism>
    <name type="scientific">Aspergillus flavipes</name>
    <dbReference type="NCBI Taxonomy" id="41900"/>
    <lineage>
        <taxon>Eukaryota</taxon>
        <taxon>Fungi</taxon>
        <taxon>Dikarya</taxon>
        <taxon>Ascomycota</taxon>
        <taxon>Pezizomycotina</taxon>
        <taxon>Eurotiomycetes</taxon>
        <taxon>Eurotiomycetidae</taxon>
        <taxon>Eurotiales</taxon>
        <taxon>Aspergillaceae</taxon>
        <taxon>Aspergillus</taxon>
        <taxon>Aspergillus subgen. Circumdati</taxon>
    </lineage>
</organism>
<keyword id="KW-0414">Isoprene biosynthesis</keyword>
<keyword id="KW-0456">Lyase</keyword>
<keyword id="KW-0460">Magnesium</keyword>
<keyword id="KW-0479">Metal-binding</keyword>
<keyword id="KW-0511">Multifunctional enzyme</keyword>
<keyword id="KW-0808">Transferase</keyword>
<feature type="chain" id="PRO_0000457139" description="Bifunctional type I diterpene synthase tndC">
    <location>
        <begin position="1"/>
        <end position="764"/>
    </location>
</feature>
<feature type="region of interest" description="Terpene cyclase" evidence="1">
    <location>
        <begin position="1"/>
        <end position="324"/>
    </location>
</feature>
<feature type="region of interest" description="Prenyltransferase" evidence="1">
    <location>
        <begin position="325"/>
        <end position="761"/>
    </location>
</feature>
<feature type="region of interest" description="Disordered" evidence="4">
    <location>
        <begin position="377"/>
        <end position="403"/>
    </location>
</feature>
<feature type="short sequence motif" description="DDXXD 1" evidence="1">
    <location>
        <begin position="92"/>
        <end position="96"/>
    </location>
</feature>
<feature type="short sequence motif" description="NSE/DTE" evidence="1">
    <location>
        <begin position="224"/>
        <end position="232"/>
    </location>
</feature>
<feature type="short sequence motif" description="DDXXD 2" evidence="1">
    <location>
        <begin position="523"/>
        <end position="527"/>
    </location>
</feature>
<feature type="compositionally biased region" description="Polar residues" evidence="4">
    <location>
        <begin position="381"/>
        <end position="391"/>
    </location>
</feature>
<feature type="binding site" evidence="3">
    <location>
        <position position="92"/>
    </location>
    <ligand>
        <name>Mg(2+)</name>
        <dbReference type="ChEBI" id="CHEBI:18420"/>
        <label>1</label>
    </ligand>
</feature>
<feature type="binding site" evidence="3">
    <location>
        <position position="92"/>
    </location>
    <ligand>
        <name>Mg(2+)</name>
        <dbReference type="ChEBI" id="CHEBI:18420"/>
        <label>2</label>
    </ligand>
</feature>
<feature type="binding site" evidence="3">
    <location>
        <position position="96"/>
    </location>
    <ligand>
        <name>Mg(2+)</name>
        <dbReference type="ChEBI" id="CHEBI:18420"/>
        <label>1</label>
    </ligand>
</feature>
<feature type="binding site" evidence="3">
    <location>
        <position position="96"/>
    </location>
    <ligand>
        <name>Mg(2+)</name>
        <dbReference type="ChEBI" id="CHEBI:18420"/>
        <label>2</label>
    </ligand>
</feature>
<feature type="binding site" evidence="2">
    <location>
        <position position="484"/>
    </location>
    <ligand>
        <name>isopentenyl diphosphate</name>
        <dbReference type="ChEBI" id="CHEBI:128769"/>
    </ligand>
</feature>
<feature type="binding site" evidence="2">
    <location>
        <position position="487"/>
    </location>
    <ligand>
        <name>isopentenyl diphosphate</name>
        <dbReference type="ChEBI" id="CHEBI:128769"/>
    </ligand>
</feature>
<feature type="binding site" evidence="2">
    <location>
        <position position="516"/>
    </location>
    <ligand>
        <name>isopentenyl diphosphate</name>
        <dbReference type="ChEBI" id="CHEBI:128769"/>
    </ligand>
</feature>
<feature type="binding site" evidence="2">
    <location>
        <position position="523"/>
    </location>
    <ligand>
        <name>Mg(2+)</name>
        <dbReference type="ChEBI" id="CHEBI:18420"/>
        <label>3</label>
    </ligand>
</feature>
<feature type="binding site" evidence="2">
    <location>
        <position position="523"/>
    </location>
    <ligand>
        <name>Mg(2+)</name>
        <dbReference type="ChEBI" id="CHEBI:18420"/>
        <label>4</label>
    </ligand>
</feature>
<feature type="binding site" evidence="2">
    <location>
        <position position="527"/>
    </location>
    <ligand>
        <name>Mg(2+)</name>
        <dbReference type="ChEBI" id="CHEBI:18420"/>
        <label>3</label>
    </ligand>
</feature>
<feature type="binding site" evidence="2">
    <location>
        <position position="527"/>
    </location>
    <ligand>
        <name>Mg(2+)</name>
        <dbReference type="ChEBI" id="CHEBI:18420"/>
        <label>4</label>
    </ligand>
</feature>
<feature type="binding site" evidence="2">
    <location>
        <position position="532"/>
    </location>
    <ligand>
        <name>dimethylallyl diphosphate</name>
        <dbReference type="ChEBI" id="CHEBI:57623"/>
    </ligand>
</feature>
<feature type="binding site" evidence="2">
    <location>
        <position position="533"/>
    </location>
    <ligand>
        <name>isopentenyl diphosphate</name>
        <dbReference type="ChEBI" id="CHEBI:128769"/>
    </ligand>
</feature>
<feature type="binding site" evidence="2">
    <location>
        <position position="610"/>
    </location>
    <ligand>
        <name>dimethylallyl diphosphate</name>
        <dbReference type="ChEBI" id="CHEBI:57623"/>
    </ligand>
</feature>
<feature type="binding site" evidence="2">
    <location>
        <position position="611"/>
    </location>
    <ligand>
        <name>dimethylallyl diphosphate</name>
        <dbReference type="ChEBI" id="CHEBI:57623"/>
    </ligand>
</feature>
<feature type="binding site" evidence="2">
    <location>
        <position position="646"/>
    </location>
    <ligand>
        <name>dimethylallyl diphosphate</name>
        <dbReference type="ChEBI" id="CHEBI:57623"/>
    </ligand>
</feature>
<feature type="binding site" evidence="2">
    <location>
        <position position="653"/>
    </location>
    <ligand>
        <name>dimethylallyl diphosphate</name>
        <dbReference type="ChEBI" id="CHEBI:57623"/>
    </ligand>
</feature>
<feature type="binding site" evidence="2">
    <location>
        <position position="663"/>
    </location>
    <ligand>
        <name>dimethylallyl diphosphate</name>
        <dbReference type="ChEBI" id="CHEBI:57623"/>
    </ligand>
</feature>
<feature type="binding site" evidence="2">
    <location>
        <position position="673"/>
    </location>
    <ligand>
        <name>dimethylallyl diphosphate</name>
        <dbReference type="ChEBI" id="CHEBI:57623"/>
    </ligand>
</feature>
<reference key="1">
    <citation type="journal article" date="2022" name="Org. Lett.">
        <title>Identification and characterization of a cryptic bifunctional type I diterpene synthase involved in talaronoid biosynthesis from a marine-derived fungus.</title>
        <authorList>
            <person name="Zhang P."/>
            <person name="Wu G."/>
            <person name="Heard S.C."/>
            <person name="Niu C."/>
            <person name="Bell S.A."/>
            <person name="Li F."/>
            <person name="Ye Y."/>
            <person name="Zhang Y."/>
            <person name="Winter J.M."/>
        </authorList>
    </citation>
    <scope>NUCLEOTIDE SEQUENCE [GENOMIC DNA]</scope>
    <scope>FUNCTION</scope>
    <scope>CATALYTIC ACTIVITY</scope>
    <scope>PATHWAY</scope>
    <source>
        <strain>CNL-338</strain>
    </source>
</reference>
<dbReference type="EC" id="4.2.3.-" evidence="5"/>
<dbReference type="EC" id="2.5.1.29" evidence="5"/>
<dbReference type="EMBL" id="MW248390">
    <property type="protein sequence ID" value="QVR97762.1"/>
    <property type="molecule type" value="Genomic_DNA"/>
</dbReference>
<dbReference type="SMR" id="A0A8K1AY78"/>
<dbReference type="UniPathway" id="UPA00213"/>
<dbReference type="GO" id="GO:0016829">
    <property type="term" value="F:lyase activity"/>
    <property type="evidence" value="ECO:0007669"/>
    <property type="project" value="UniProtKB-KW"/>
</dbReference>
<dbReference type="GO" id="GO:0046872">
    <property type="term" value="F:metal ion binding"/>
    <property type="evidence" value="ECO:0007669"/>
    <property type="project" value="UniProtKB-KW"/>
</dbReference>
<dbReference type="GO" id="GO:0004659">
    <property type="term" value="F:prenyltransferase activity"/>
    <property type="evidence" value="ECO:0007669"/>
    <property type="project" value="InterPro"/>
</dbReference>
<dbReference type="GO" id="GO:0046165">
    <property type="term" value="P:alcohol biosynthetic process"/>
    <property type="evidence" value="ECO:0007669"/>
    <property type="project" value="UniProtKB-ARBA"/>
</dbReference>
<dbReference type="GO" id="GO:0043386">
    <property type="term" value="P:mycotoxin biosynthetic process"/>
    <property type="evidence" value="ECO:0007669"/>
    <property type="project" value="UniProtKB-ARBA"/>
</dbReference>
<dbReference type="GO" id="GO:0016114">
    <property type="term" value="P:terpenoid biosynthetic process"/>
    <property type="evidence" value="ECO:0007669"/>
    <property type="project" value="UniProtKB-UniPathway"/>
</dbReference>
<dbReference type="Gene3D" id="1.10.600.10">
    <property type="entry name" value="Farnesyl Diphosphate Synthase"/>
    <property type="match status" value="2"/>
</dbReference>
<dbReference type="InterPro" id="IPR008949">
    <property type="entry name" value="Isoprenoid_synthase_dom_sf"/>
</dbReference>
<dbReference type="InterPro" id="IPR000092">
    <property type="entry name" value="Polyprenyl_synt"/>
</dbReference>
<dbReference type="InterPro" id="IPR033749">
    <property type="entry name" value="Polyprenyl_synt_CS"/>
</dbReference>
<dbReference type="PANTHER" id="PTHR12001">
    <property type="entry name" value="GERANYLGERANYL PYROPHOSPHATE SYNTHASE"/>
    <property type="match status" value="1"/>
</dbReference>
<dbReference type="PANTHER" id="PTHR12001:SF72">
    <property type="entry name" value="THIJ_PFPI FAMILY PROTEIN (AFU_ORTHOLOGUE AFUA_3G01210)-RELATED"/>
    <property type="match status" value="1"/>
</dbReference>
<dbReference type="Pfam" id="PF00348">
    <property type="entry name" value="polyprenyl_synt"/>
    <property type="match status" value="1"/>
</dbReference>
<dbReference type="Pfam" id="PF19086">
    <property type="entry name" value="Terpene_syn_C_2"/>
    <property type="match status" value="1"/>
</dbReference>
<dbReference type="SFLD" id="SFLDS00005">
    <property type="entry name" value="Isoprenoid_Synthase_Type_I"/>
    <property type="match status" value="1"/>
</dbReference>
<dbReference type="SUPFAM" id="SSF48576">
    <property type="entry name" value="Terpenoid synthases"/>
    <property type="match status" value="2"/>
</dbReference>
<dbReference type="PROSITE" id="PS00723">
    <property type="entry name" value="POLYPRENYL_SYNTHASE_1"/>
    <property type="match status" value="1"/>
</dbReference>